<organism>
    <name type="scientific">Idiomarina loihiensis (strain ATCC BAA-735 / DSM 15497 / L2-TR)</name>
    <dbReference type="NCBI Taxonomy" id="283942"/>
    <lineage>
        <taxon>Bacteria</taxon>
        <taxon>Pseudomonadati</taxon>
        <taxon>Pseudomonadota</taxon>
        <taxon>Gammaproteobacteria</taxon>
        <taxon>Alteromonadales</taxon>
        <taxon>Idiomarinaceae</taxon>
        <taxon>Idiomarina</taxon>
    </lineage>
</organism>
<name>YIDD_IDILO</name>
<feature type="chain" id="PRO_0000253114" description="Putative membrane protein insertion efficiency factor">
    <location>
        <begin position="1"/>
        <end position="103"/>
    </location>
</feature>
<feature type="region of interest" description="Disordered" evidence="2">
    <location>
        <begin position="68"/>
        <end position="103"/>
    </location>
</feature>
<feature type="compositionally biased region" description="Polar residues" evidence="2">
    <location>
        <begin position="87"/>
        <end position="103"/>
    </location>
</feature>
<proteinExistence type="inferred from homology"/>
<accession>Q5QZJ3</accession>
<reference key="1">
    <citation type="journal article" date="2004" name="Proc. Natl. Acad. Sci. U.S.A.">
        <title>Genome sequence of the deep-sea gamma-proteobacterium Idiomarina loihiensis reveals amino acid fermentation as a source of carbon and energy.</title>
        <authorList>
            <person name="Hou S."/>
            <person name="Saw J.H."/>
            <person name="Lee K.S."/>
            <person name="Freitas T.A."/>
            <person name="Belisle C."/>
            <person name="Kawarabayasi Y."/>
            <person name="Donachie S.P."/>
            <person name="Pikina A."/>
            <person name="Galperin M.Y."/>
            <person name="Koonin E.V."/>
            <person name="Makarova K.S."/>
            <person name="Omelchenko M.V."/>
            <person name="Sorokin A."/>
            <person name="Wolf Y.I."/>
            <person name="Li Q.X."/>
            <person name="Keum Y.S."/>
            <person name="Campbell S."/>
            <person name="Denery J."/>
            <person name="Aizawa S."/>
            <person name="Shibata S."/>
            <person name="Malahoff A."/>
            <person name="Alam M."/>
        </authorList>
    </citation>
    <scope>NUCLEOTIDE SEQUENCE [LARGE SCALE GENOMIC DNA]</scope>
    <source>
        <strain>ATCC BAA-735 / DSM 15497 / L2-TR</strain>
    </source>
</reference>
<dbReference type="EMBL" id="AE017340">
    <property type="protein sequence ID" value="AAV83470.1"/>
    <property type="molecule type" value="Genomic_DNA"/>
</dbReference>
<dbReference type="STRING" id="283942.IL2638"/>
<dbReference type="KEGG" id="ilo:IL2638"/>
<dbReference type="eggNOG" id="COG0759">
    <property type="taxonomic scope" value="Bacteria"/>
</dbReference>
<dbReference type="HOGENOM" id="CLU_144811_2_1_6"/>
<dbReference type="OrthoDB" id="9801753at2"/>
<dbReference type="Proteomes" id="UP000001171">
    <property type="component" value="Chromosome"/>
</dbReference>
<dbReference type="GO" id="GO:0005886">
    <property type="term" value="C:plasma membrane"/>
    <property type="evidence" value="ECO:0007669"/>
    <property type="project" value="UniProtKB-SubCell"/>
</dbReference>
<dbReference type="HAMAP" id="MF_00386">
    <property type="entry name" value="UPF0161_YidD"/>
    <property type="match status" value="1"/>
</dbReference>
<dbReference type="InterPro" id="IPR002696">
    <property type="entry name" value="Membr_insert_effic_factor_YidD"/>
</dbReference>
<dbReference type="NCBIfam" id="TIGR00278">
    <property type="entry name" value="membrane protein insertion efficiency factor YidD"/>
    <property type="match status" value="1"/>
</dbReference>
<dbReference type="PANTHER" id="PTHR33383">
    <property type="entry name" value="MEMBRANE PROTEIN INSERTION EFFICIENCY FACTOR-RELATED"/>
    <property type="match status" value="1"/>
</dbReference>
<dbReference type="PANTHER" id="PTHR33383:SF1">
    <property type="entry name" value="MEMBRANE PROTEIN INSERTION EFFICIENCY FACTOR-RELATED"/>
    <property type="match status" value="1"/>
</dbReference>
<dbReference type="Pfam" id="PF01809">
    <property type="entry name" value="YidD"/>
    <property type="match status" value="1"/>
</dbReference>
<dbReference type="SMART" id="SM01234">
    <property type="entry name" value="Haemolytic"/>
    <property type="match status" value="1"/>
</dbReference>
<evidence type="ECO:0000255" key="1">
    <source>
        <dbReference type="HAMAP-Rule" id="MF_00386"/>
    </source>
</evidence>
<evidence type="ECO:0000256" key="2">
    <source>
        <dbReference type="SAM" id="MobiDB-lite"/>
    </source>
</evidence>
<gene>
    <name type="ordered locus">IL2638</name>
</gene>
<keyword id="KW-0997">Cell inner membrane</keyword>
<keyword id="KW-1003">Cell membrane</keyword>
<keyword id="KW-0472">Membrane</keyword>
<keyword id="KW-1185">Reference proteome</keyword>
<sequence length="103" mass="11393">MAKISKALRTIPIAFIKVYQWFISPLLGPRCRFYPSCSHYACEAIQKHGTIRGIGLAAVRISKCHPAHEGGYDPVPLAKQDAKPENNSESESLLNQPTETKSL</sequence>
<protein>
    <recommendedName>
        <fullName evidence="1">Putative membrane protein insertion efficiency factor</fullName>
    </recommendedName>
</protein>
<comment type="function">
    <text evidence="1">Could be involved in insertion of integral membrane proteins into the membrane.</text>
</comment>
<comment type="subcellular location">
    <subcellularLocation>
        <location evidence="1">Cell inner membrane</location>
        <topology evidence="1">Peripheral membrane protein</topology>
        <orientation evidence="1">Cytoplasmic side</orientation>
    </subcellularLocation>
</comment>
<comment type="similarity">
    <text evidence="1">Belongs to the UPF0161 family.</text>
</comment>